<organism>
    <name type="scientific">Streptococcus pneumoniae (strain ATCC 700669 / Spain 23F-1)</name>
    <dbReference type="NCBI Taxonomy" id="561276"/>
    <lineage>
        <taxon>Bacteria</taxon>
        <taxon>Bacillati</taxon>
        <taxon>Bacillota</taxon>
        <taxon>Bacilli</taxon>
        <taxon>Lactobacillales</taxon>
        <taxon>Streptococcaceae</taxon>
        <taxon>Streptococcus</taxon>
    </lineage>
</organism>
<evidence type="ECO:0000255" key="1">
    <source>
        <dbReference type="HAMAP-Rule" id="MF_00228"/>
    </source>
</evidence>
<name>THIM1_STRPJ</name>
<feature type="chain" id="PRO_1000198131" description="Hydroxyethylthiazole kinase 1">
    <location>
        <begin position="1"/>
        <end position="260"/>
    </location>
</feature>
<feature type="binding site" evidence="1">
    <location>
        <position position="39"/>
    </location>
    <ligand>
        <name>substrate</name>
    </ligand>
</feature>
<feature type="binding site" evidence="1">
    <location>
        <position position="115"/>
    </location>
    <ligand>
        <name>ATP</name>
        <dbReference type="ChEBI" id="CHEBI:30616"/>
    </ligand>
</feature>
<feature type="binding site" evidence="1">
    <location>
        <position position="160"/>
    </location>
    <ligand>
        <name>ATP</name>
        <dbReference type="ChEBI" id="CHEBI:30616"/>
    </ligand>
</feature>
<feature type="binding site" evidence="1">
    <location>
        <position position="187"/>
    </location>
    <ligand>
        <name>substrate</name>
    </ligand>
</feature>
<protein>
    <recommendedName>
        <fullName evidence="1">Hydroxyethylthiazole kinase 1</fullName>
        <ecNumber evidence="1">2.7.1.50</ecNumber>
    </recommendedName>
    <alternativeName>
        <fullName evidence="1">4-methyl-5-beta-hydroxyethylthiazole kinase 1</fullName>
        <shortName evidence="1">TH kinase 1</shortName>
        <shortName evidence="1">Thz kinase 1</shortName>
    </alternativeName>
</protein>
<comment type="function">
    <text evidence="1">Catalyzes the phosphorylation of the hydroxyl group of 4-methyl-5-beta-hydroxyethylthiazole (THZ).</text>
</comment>
<comment type="catalytic activity">
    <reaction evidence="1">
        <text>5-(2-hydroxyethyl)-4-methylthiazole + ATP = 4-methyl-5-(2-phosphooxyethyl)-thiazole + ADP + H(+)</text>
        <dbReference type="Rhea" id="RHEA:24212"/>
        <dbReference type="ChEBI" id="CHEBI:15378"/>
        <dbReference type="ChEBI" id="CHEBI:17957"/>
        <dbReference type="ChEBI" id="CHEBI:30616"/>
        <dbReference type="ChEBI" id="CHEBI:58296"/>
        <dbReference type="ChEBI" id="CHEBI:456216"/>
        <dbReference type="EC" id="2.7.1.50"/>
    </reaction>
</comment>
<comment type="cofactor">
    <cofactor evidence="1">
        <name>Mg(2+)</name>
        <dbReference type="ChEBI" id="CHEBI:18420"/>
    </cofactor>
</comment>
<comment type="pathway">
    <text evidence="1">Cofactor biosynthesis; thiamine diphosphate biosynthesis; 4-methyl-5-(2-phosphoethyl)-thiazole from 5-(2-hydroxyethyl)-4-methylthiazole: step 1/1.</text>
</comment>
<comment type="similarity">
    <text evidence="1">Belongs to the Thz kinase family.</text>
</comment>
<reference key="1">
    <citation type="journal article" date="2009" name="J. Bacteriol.">
        <title>Role of conjugative elements in the evolution of the multidrug-resistant pandemic clone Streptococcus pneumoniae Spain23F ST81.</title>
        <authorList>
            <person name="Croucher N.J."/>
            <person name="Walker D."/>
            <person name="Romero P."/>
            <person name="Lennard N."/>
            <person name="Paterson G.K."/>
            <person name="Bason N.C."/>
            <person name="Mitchell A.M."/>
            <person name="Quail M.A."/>
            <person name="Andrew P.W."/>
            <person name="Parkhill J."/>
            <person name="Bentley S.D."/>
            <person name="Mitchell T.J."/>
        </authorList>
    </citation>
    <scope>NUCLEOTIDE SEQUENCE [LARGE SCALE GENOMIC DNA]</scope>
    <source>
        <strain>ATCC 700669 / Spain 23F-1</strain>
    </source>
</reference>
<gene>
    <name evidence="1" type="primary">thiM1</name>
    <name type="ordered locus">SPN23F06420</name>
</gene>
<proteinExistence type="inferred from homology"/>
<sequence length="260" mass="27635">MTSLKLLKEKAPLVICITNDVVKNFTANGLVALGASPAMSEFPADLEDLLKYAGGLLINIGTLTDENWKLYQAALKIAEKYNVPVVLDPVACGAGEYRKKVADDLINNYKLAAIRGNAGEIASLVGIDVASKGVDSAGVDNIDEIALAANEKFNIPIVVTGEVDAIAVNGEVVTIHNGSAMMPKVIGTGCLLGAVVASFIGLEKGQELKSLETAMLVYNIAGEMAEKRPNGHLPGTFKVEFINALYEITDEDVKEFKRVK</sequence>
<accession>B8ZN14</accession>
<keyword id="KW-0067">ATP-binding</keyword>
<keyword id="KW-0418">Kinase</keyword>
<keyword id="KW-0460">Magnesium</keyword>
<keyword id="KW-0479">Metal-binding</keyword>
<keyword id="KW-0547">Nucleotide-binding</keyword>
<keyword id="KW-0784">Thiamine biosynthesis</keyword>
<keyword id="KW-0808">Transferase</keyword>
<dbReference type="EC" id="2.7.1.50" evidence="1"/>
<dbReference type="EMBL" id="FM211187">
    <property type="protein sequence ID" value="CAR68489.1"/>
    <property type="molecule type" value="Genomic_DNA"/>
</dbReference>
<dbReference type="SMR" id="B8ZN14"/>
<dbReference type="KEGG" id="sne:SPN23F06420"/>
<dbReference type="HOGENOM" id="CLU_019943_0_2_9"/>
<dbReference type="UniPathway" id="UPA00060">
    <property type="reaction ID" value="UER00139"/>
</dbReference>
<dbReference type="GO" id="GO:0005524">
    <property type="term" value="F:ATP binding"/>
    <property type="evidence" value="ECO:0007669"/>
    <property type="project" value="UniProtKB-UniRule"/>
</dbReference>
<dbReference type="GO" id="GO:0004417">
    <property type="term" value="F:hydroxyethylthiazole kinase activity"/>
    <property type="evidence" value="ECO:0007669"/>
    <property type="project" value="UniProtKB-UniRule"/>
</dbReference>
<dbReference type="GO" id="GO:0000287">
    <property type="term" value="F:magnesium ion binding"/>
    <property type="evidence" value="ECO:0007669"/>
    <property type="project" value="UniProtKB-UniRule"/>
</dbReference>
<dbReference type="GO" id="GO:0009228">
    <property type="term" value="P:thiamine biosynthetic process"/>
    <property type="evidence" value="ECO:0007669"/>
    <property type="project" value="UniProtKB-KW"/>
</dbReference>
<dbReference type="GO" id="GO:0009229">
    <property type="term" value="P:thiamine diphosphate biosynthetic process"/>
    <property type="evidence" value="ECO:0007669"/>
    <property type="project" value="UniProtKB-UniRule"/>
</dbReference>
<dbReference type="CDD" id="cd01170">
    <property type="entry name" value="THZ_kinase"/>
    <property type="match status" value="1"/>
</dbReference>
<dbReference type="Gene3D" id="3.40.1190.20">
    <property type="match status" value="1"/>
</dbReference>
<dbReference type="HAMAP" id="MF_00228">
    <property type="entry name" value="Thz_kinase"/>
    <property type="match status" value="1"/>
</dbReference>
<dbReference type="InterPro" id="IPR000417">
    <property type="entry name" value="Hyethyz_kinase"/>
</dbReference>
<dbReference type="InterPro" id="IPR029056">
    <property type="entry name" value="Ribokinase-like"/>
</dbReference>
<dbReference type="NCBIfam" id="NF006830">
    <property type="entry name" value="PRK09355.1"/>
    <property type="match status" value="1"/>
</dbReference>
<dbReference type="NCBIfam" id="TIGR00694">
    <property type="entry name" value="thiM"/>
    <property type="match status" value="1"/>
</dbReference>
<dbReference type="Pfam" id="PF02110">
    <property type="entry name" value="HK"/>
    <property type="match status" value="1"/>
</dbReference>
<dbReference type="PIRSF" id="PIRSF000513">
    <property type="entry name" value="Thz_kinase"/>
    <property type="match status" value="1"/>
</dbReference>
<dbReference type="PRINTS" id="PR01099">
    <property type="entry name" value="HYETHTZKNASE"/>
</dbReference>
<dbReference type="SUPFAM" id="SSF53613">
    <property type="entry name" value="Ribokinase-like"/>
    <property type="match status" value="1"/>
</dbReference>